<dbReference type="EMBL" id="Y00459">
    <property type="protein sequence ID" value="CAA68518.1"/>
    <property type="molecule type" value="Genomic_DNA"/>
</dbReference>
<dbReference type="EMBL" id="X05045">
    <property type="protein sequence ID" value="CAA28719.1"/>
    <property type="molecule type" value="Genomic_DNA"/>
</dbReference>
<dbReference type="PIR" id="S17776">
    <property type="entry name" value="S17776"/>
</dbReference>
<dbReference type="RefSeq" id="WP_003970241.1">
    <property type="nucleotide sequence ID" value="NZ_UAVD01000010.1"/>
</dbReference>
<dbReference type="SMR" id="P09397"/>
<dbReference type="OMA" id="AYNAMFD"/>
<dbReference type="OrthoDB" id="4018098at2"/>
<dbReference type="UniPathway" id="UPA00066"/>
<dbReference type="GO" id="GO:0019872">
    <property type="term" value="P:streptomycin biosynthetic process"/>
    <property type="evidence" value="ECO:0007669"/>
    <property type="project" value="UniProtKB-UniPathway"/>
</dbReference>
<dbReference type="Gene3D" id="3.90.550.10">
    <property type="entry name" value="Spore Coat Polysaccharide Biosynthesis Protein SpsA, Chain A"/>
    <property type="match status" value="1"/>
</dbReference>
<dbReference type="InterPro" id="IPR029044">
    <property type="entry name" value="Nucleotide-diphossugar_trans"/>
</dbReference>
<dbReference type="Pfam" id="PF13712">
    <property type="entry name" value="Glyco_tranf_2_5"/>
    <property type="match status" value="1"/>
</dbReference>
<dbReference type="SUPFAM" id="SSF53448">
    <property type="entry name" value="Nucleotide-diphospho-sugar transferases"/>
    <property type="match status" value="1"/>
</dbReference>
<comment type="function">
    <text>May be involved in the formation of N-methyl-L-glucosamine.</text>
</comment>
<comment type="pathway">
    <text>Antibiotic biosynthesis; streptomycin biosynthesis.</text>
</comment>
<organism>
    <name type="scientific">Streptomyces griseus</name>
    <dbReference type="NCBI Taxonomy" id="1911"/>
    <lineage>
        <taxon>Bacteria</taxon>
        <taxon>Bacillati</taxon>
        <taxon>Actinomycetota</taxon>
        <taxon>Actinomycetes</taxon>
        <taxon>Kitasatosporales</taxon>
        <taxon>Streptomycetaceae</taxon>
        <taxon>Streptomyces</taxon>
    </lineage>
</organism>
<sequence>MIGYGVCVGPGTLFERTCLPGIERVRAPGSPVFTMRNQRSLFSAYNAMFDQAAANSDITGLVMLHDDVELRKNPAEVAQSVFEDDSVGMLGSVGGSDTVSLAWWNERETRRGRVTDYDKVHDYGSDRYEVEAVDDVILCVNRWTIENIRFPEGHYRGFEGLGVILATLVRAAGKRVMVQDLQDVMHHNDGRGFNGLKDWRHNELRWHREFFDLSPAERLGNHLERLTIPAVPLRLAARRLAMRVGGRSHEVSDGETGDPVIDRLVGGWYRQCTRLRGRMLV</sequence>
<proteinExistence type="predicted"/>
<gene>
    <name type="primary">strF</name>
</gene>
<accession>P09397</accession>
<accession>Q54254</accession>
<evidence type="ECO:0000305" key="1"/>
<reference key="1">
    <citation type="journal article" date="1991" name="Mol. Gen. Genet.">
        <title>Genetics of streptomycin production in Streptomyces griseus: nucleotide sequence of five genes, strFGHIK, including a phosphatase gene.</title>
        <authorList>
            <person name="Mansouri K."/>
            <person name="Piepersberg W."/>
        </authorList>
    </citation>
    <scope>NUCLEOTIDE SEQUENCE [GENOMIC DNA]</scope>
    <source>
        <strain>N2-3-11</strain>
    </source>
</reference>
<reference key="2">
    <citation type="journal article" date="1987" name="Nucleic Acids Res.">
        <title>Nucleotide sequence of the streptomycinphosphotransferase and amidinotransferase genes from Streptomyces griseus.</title>
        <authorList>
            <person name="Tohyama H."/>
            <person name="Okami Y."/>
            <person name="Umezawa H."/>
        </authorList>
    </citation>
    <scope>NUCLEOTIDE SEQUENCE [GENOMIC DNA] OF 48-96</scope>
    <source>
        <strain>ATCC 23345 / DSM 40236 / JCM 4644 / NBRC 12875 / NCIMB 13023 / NRRL B-2682 / VKM Ac-800 / IMRU 3463</strain>
    </source>
</reference>
<keyword id="KW-0045">Antibiotic biosynthesis</keyword>
<keyword id="KW-0759">Streptomycin biosynthesis</keyword>
<name>STRF_STRGR</name>
<protein>
    <recommendedName>
        <fullName>Streptomycin biosynthesis protein StrF</fullName>
    </recommendedName>
</protein>
<feature type="chain" id="PRO_0000072283" description="Streptomycin biosynthesis protein StrF">
    <location>
        <begin position="1"/>
        <end position="281"/>
    </location>
</feature>
<feature type="sequence conflict" description="In Ref. 2; CAA28719." evidence="1" ref="2">
    <original>S</original>
    <variation>I</variation>
    <location>
        <position position="96"/>
    </location>
</feature>